<feature type="chain" id="PRO_0000343782" description="Protein Ycf2">
    <location>
        <begin position="1"/>
        <end position="2262"/>
    </location>
</feature>
<feature type="binding site" evidence="1">
    <location>
        <begin position="1607"/>
        <end position="1614"/>
    </location>
    <ligand>
        <name>ATP</name>
        <dbReference type="ChEBI" id="CHEBI:30616"/>
    </ligand>
</feature>
<evidence type="ECO:0000255" key="1">
    <source>
        <dbReference type="HAMAP-Rule" id="MF_01330"/>
    </source>
</evidence>
<keyword id="KW-0067">ATP-binding</keyword>
<keyword id="KW-0150">Chloroplast</keyword>
<keyword id="KW-0547">Nucleotide-binding</keyword>
<keyword id="KW-0934">Plastid</keyword>
<organism>
    <name type="scientific">Nuphar advena</name>
    <name type="common">Common spatterdock</name>
    <name type="synonym">Nuphar lutea subsp. advena</name>
    <dbReference type="NCBI Taxonomy" id="77108"/>
    <lineage>
        <taxon>Eukaryota</taxon>
        <taxon>Viridiplantae</taxon>
        <taxon>Streptophyta</taxon>
        <taxon>Embryophyta</taxon>
        <taxon>Tracheophyta</taxon>
        <taxon>Spermatophyta</taxon>
        <taxon>Magnoliopsida</taxon>
        <taxon>Nymphaeales</taxon>
        <taxon>Nymphaeaceae</taxon>
        <taxon>Nuphar</taxon>
    </lineage>
</organism>
<geneLocation type="chloroplast"/>
<proteinExistence type="inferred from homology"/>
<protein>
    <recommendedName>
        <fullName evidence="1">Protein Ycf2</fullName>
    </recommendedName>
</protein>
<gene>
    <name evidence="1" type="primary">ycf2-A</name>
</gene>
<gene>
    <name evidence="1" type="primary">ycf2-B</name>
</gene>
<dbReference type="EMBL" id="DQ354691">
    <property type="protein sequence ID" value="ABC60502.1"/>
    <property type="molecule type" value="Genomic_DNA"/>
</dbReference>
<dbReference type="EMBL" id="DQ354691">
    <property type="protein sequence ID" value="ABC60520.1"/>
    <property type="molecule type" value="Genomic_DNA"/>
</dbReference>
<dbReference type="GO" id="GO:0009570">
    <property type="term" value="C:chloroplast stroma"/>
    <property type="evidence" value="ECO:0007669"/>
    <property type="project" value="UniProtKB-SubCell"/>
</dbReference>
<dbReference type="GO" id="GO:0005524">
    <property type="term" value="F:ATP binding"/>
    <property type="evidence" value="ECO:0007669"/>
    <property type="project" value="UniProtKB-KW"/>
</dbReference>
<dbReference type="GO" id="GO:0016887">
    <property type="term" value="F:ATP hydrolysis activity"/>
    <property type="evidence" value="ECO:0007669"/>
    <property type="project" value="InterPro"/>
</dbReference>
<dbReference type="CDD" id="cd19505">
    <property type="entry name" value="RecA-like_Ycf2"/>
    <property type="match status" value="1"/>
</dbReference>
<dbReference type="Gene3D" id="3.40.50.300">
    <property type="entry name" value="P-loop containing nucleotide triphosphate hydrolases"/>
    <property type="match status" value="1"/>
</dbReference>
<dbReference type="HAMAP" id="MF_01330">
    <property type="entry name" value="Ycf2"/>
    <property type="match status" value="1"/>
</dbReference>
<dbReference type="InterPro" id="IPR003959">
    <property type="entry name" value="ATPase_AAA_core"/>
</dbReference>
<dbReference type="InterPro" id="IPR027417">
    <property type="entry name" value="P-loop_NTPase"/>
</dbReference>
<dbReference type="InterPro" id="IPR008543">
    <property type="entry name" value="Uncharacterised_Ycf2"/>
</dbReference>
<dbReference type="InterPro" id="IPR056777">
    <property type="entry name" value="Ycf2_N"/>
</dbReference>
<dbReference type="PANTHER" id="PTHR33078:SF92">
    <property type="entry name" value="PROTEIN YCF2"/>
    <property type="match status" value="1"/>
</dbReference>
<dbReference type="PANTHER" id="PTHR33078">
    <property type="entry name" value="PROTEIN YCF2-RELATED"/>
    <property type="match status" value="1"/>
</dbReference>
<dbReference type="Pfam" id="PF00004">
    <property type="entry name" value="AAA"/>
    <property type="match status" value="1"/>
</dbReference>
<dbReference type="Pfam" id="PF05695">
    <property type="entry name" value="Ycf2"/>
    <property type="match status" value="2"/>
</dbReference>
<dbReference type="SUPFAM" id="SSF52540">
    <property type="entry name" value="P-loop containing nucleoside triphosphate hydrolases"/>
    <property type="match status" value="1"/>
</dbReference>
<sequence length="2262" mass="265335">MKRHQFKSCIFELREILREIKNSRYFLDSWTKFDSVVSFTHIFFHQERFVKLLGPQTWSVLLSRDSQGSTSNRYFTIKGVVLLVVAVLIYRINNRNMVERKNLYLMGLLPIPMNSIGPRNDTLEESFWSPNINRLIVSLLYLPKGKKISESCFMDPKESTWVLPITKKCIMPESNWGSRWWRNWIGKKRDSSCKISNETVAGIEISFKEKDIKYLEFLFVSYMDDPIRKDHGWELFDRVSPRKKRNIINLNSGQLFEILAKHLICYLMSAFREKRPIEVEGFLKQQGAEATIQSNDIEHVSHLFSRNKWDISLQNCAQFHVWQFHQDLFVSWGKNHHESDFLRNVSRENLIWLDNMWLVNKDRFFSKVRNVSSNIQYDSTRSIFVQVTDSSQLKGSSDQSRENFDSISNEDSEYHTLINQTEIQQLKERLILWDPSSLQTERTEIESDRFPKYPSGYSSMSRLFTEREKQMNNHLFPEKIEEFLGNPTRSIRSFFSDRWSELHLVSNATERFARDHKLLKKQQDVFSFVPSRRSEKKEMVDIFKIITYLQNTVSIHPISSDPGCDMVPRDEPDMDSSNKISFLNKNPFCDLFHLFHDRNKGRYTLHHDFESEERFQEMADLFTLSITEPDLVYHKGFAFSMDSYGLDQKKFLNEVFNSRDESKKNSLLVLPHIFYEENESFYRRIRKKWVRISCRNGLEDPKPKIVVFASNNIMEAVNQYRLIRNLIQIQYSTYGYIRNLSNRFSLMNRSDRNFEYGIQRDQIGNDTLNHITIMKYMINQHLSNVKKSQKKWFDPLISRTERSMNRDPNAYRYKWSNGSKNFQEHLEHFVSEQKNRFQVVFDRLRINQHSIDWSKVIDKQDLSKSLHFFLSKSLLFLSKSLTFFFVSIGNIPIHRSEIHIYELKGPNDQLCNQLLESIGVQIVHLNKLKPFLLDDHDTSQRSKFLINGGTISAFLFNKIPKWMIDSLHTRNNRRKFFDNTDSYFSMISHDRDNWLNPVKPFHRSSLISSFYKANLLRFLNNPHHFCFYSNKRFPFYAEKTRIDNYDLTYGQFLHTYGQFLHISFIRNKIFSLCVGKKKHVFLERDTISPIESQVSDIFIPNDFPQSGDETYNLYKSQPLSTYCQPLSDMNLSDSEGKNLHQYLSFNSNMGLIHTPCSEKYLPSAKKRNLCLKKCVEKGQMYRAFQRDSAFSNLSKWNLFQTYMPWFLTSAGCKYINLILLDTFSDPLPILSSSHKFVSFFYDITHGSDISWSILQIPLWAILPQWNLISEISSKCLQNLLLPEEMIHRNNESPVPLKWTHLRSPNAREFLYSILFLLLVAGYLVRTHLLFISRVSSELQTELEKIKSLMIQSYMIELRKLLDRYPPPELNSFWLKNLFLVALEQLGDSLEEIRSSASGGNMLLGGGPTYGVKSIRSKKKDLNINLIDIIYLISIIPNPINPITFSRNTRHLSRTSKEIYSLIRKNVNSDWIDDQIESWVANSDLIDDEEREFLVQFSTLTTEKRIDQILLSLTHSDHLSKNDSGYQMIEQPGSIYLRYLVDIHKKYLMNYEFNRSCLAERRIFLAHYQTITYSQTPCGANSSHFPSHGKPFSLRLALPPSRGILVIGFIGTGRSYFVKYRVTNSYVPFITVFPNKFLDDNKGYLIDDIDIDDSDDIDIDDSDDIDDDLDTELLTMPNVLTMYMTPKIDRFEITLPLELAKAMSPCIIWIPNIHDLYVNESNYLSLGLLVNHLPRDCERCSTRNILVIASTHIPQKVDPALIAPNKSNTCIKIRRLLIPQQRKHFFILSYTRGFRLEKKMSHTNGFGSITMGSNARDLVALTNEVLSISITQKKSIIDTNTIRSALHRQTWDLRSQVRSVQDHEILFYQIGRAVAQNVLLSNCSIDPISIYMKKKSCKEGDSYLSKWYFELGTSMKKLTILLYLLSCSAGSVAQDLWSPPGPDEKNWITSYGFVENDSDLVHGLLESALVGYSRTECSQFDNDRVTLLLRSEPRNQLDMMQNGSCSIVDQRFLYEKYESGFEEGEGEGTLDLQQIEEDEDLFNHIVWAPRLWRPHGNLFDCIERPNKLGFPYWVRSFRGKKIIYHKEDKLQENDSEFLQSGTVQYQTRDRSSKEQGFFRISQFIWDPADQFFFLFKDQPFVSVFSRREFFADEEMSKGLITSQTNPPTSIYKRWLIKNTQEKHFELLIHRQRWLRTNTNSSLSNGSFRSNTLSESYQYLSNLFLSNNGTLLDQMTKTLLRKRWLFPDEMKHLIHAPGERFPIP</sequence>
<name>YCF2_NUPAD</name>
<reference key="1">
    <citation type="journal article" date="2007" name="BMC Genomics">
        <title>Comparative chloroplast genomics: analyses including new sequences from the angiosperms Nuphar advena and Ranunculus macranthus.</title>
        <authorList>
            <person name="Raubeson L.A."/>
            <person name="Peery R."/>
            <person name="Chumley T.W."/>
            <person name="Dziubek C."/>
            <person name="Fourcade H.M."/>
            <person name="Boore J.L."/>
            <person name="Jansen R.K."/>
        </authorList>
    </citation>
    <scope>NUCLEOTIDE SEQUENCE [LARGE SCALE GENOMIC DNA]</scope>
</reference>
<comment type="function">
    <text evidence="1">Probable ATPase of unknown function. Its presence in a non-photosynthetic plant (Epifagus virginiana) and experiments in tobacco indicate that it has an essential function which is probably not related to photosynthesis.</text>
</comment>
<comment type="subcellular location">
    <subcellularLocation>
        <location evidence="1">Plastid</location>
        <location evidence="1">Chloroplast stroma</location>
    </subcellularLocation>
</comment>
<comment type="similarity">
    <text evidence="1">Belongs to the Ycf2 family.</text>
</comment>
<accession>A1XFZ9</accession>